<evidence type="ECO:0000250" key="1"/>
<evidence type="ECO:0000255" key="2">
    <source>
        <dbReference type="PROSITE-ProRule" id="PRU00448"/>
    </source>
</evidence>
<evidence type="ECO:0000305" key="3"/>
<proteinExistence type="evidence at transcript level"/>
<reference key="1">
    <citation type="journal article" date="2005" name="Mol. Genet. Genomics">
        <title>A fine physical map of the rice chromosome 5.</title>
        <authorList>
            <person name="Cheng C.-H."/>
            <person name="Chung M.C."/>
            <person name="Liu S.-M."/>
            <person name="Chen S.-K."/>
            <person name="Kao F.Y."/>
            <person name="Lin S.-J."/>
            <person name="Hsiao S.-H."/>
            <person name="Tseng I.C."/>
            <person name="Hsing Y.-I.C."/>
            <person name="Wu H.-P."/>
            <person name="Chen C.-S."/>
            <person name="Shaw J.-F."/>
            <person name="Wu J."/>
            <person name="Matsumoto T."/>
            <person name="Sasaki T."/>
            <person name="Chen H.-C."/>
            <person name="Chow T.-Y."/>
        </authorList>
    </citation>
    <scope>NUCLEOTIDE SEQUENCE [LARGE SCALE GENOMIC DNA]</scope>
    <source>
        <strain>cv. Nipponbare</strain>
    </source>
</reference>
<reference key="2">
    <citation type="journal article" date="2005" name="Nature">
        <title>The map-based sequence of the rice genome.</title>
        <authorList>
            <consortium name="International rice genome sequencing project (IRGSP)"/>
        </authorList>
    </citation>
    <scope>NUCLEOTIDE SEQUENCE [LARGE SCALE GENOMIC DNA]</scope>
    <source>
        <strain>cv. Nipponbare</strain>
    </source>
</reference>
<reference key="3">
    <citation type="journal article" date="2008" name="Nucleic Acids Res.">
        <title>The rice annotation project database (RAP-DB): 2008 update.</title>
        <authorList>
            <consortium name="The rice annotation project (RAP)"/>
        </authorList>
    </citation>
    <scope>GENOME REANNOTATION</scope>
    <source>
        <strain>cv. Nipponbare</strain>
    </source>
</reference>
<reference key="4">
    <citation type="journal article" date="2013" name="Rice">
        <title>Improvement of the Oryza sativa Nipponbare reference genome using next generation sequence and optical map data.</title>
        <authorList>
            <person name="Kawahara Y."/>
            <person name="de la Bastide M."/>
            <person name="Hamilton J.P."/>
            <person name="Kanamori H."/>
            <person name="McCombie W.R."/>
            <person name="Ouyang S."/>
            <person name="Schwartz D.C."/>
            <person name="Tanaka T."/>
            <person name="Wu J."/>
            <person name="Zhou S."/>
            <person name="Childs K.L."/>
            <person name="Davidson R.M."/>
            <person name="Lin H."/>
            <person name="Quesada-Ocampo L."/>
            <person name="Vaillancourt B."/>
            <person name="Sakai H."/>
            <person name="Lee S.S."/>
            <person name="Kim J."/>
            <person name="Numa H."/>
            <person name="Itoh T."/>
            <person name="Buell C.R."/>
            <person name="Matsumoto T."/>
        </authorList>
    </citation>
    <scope>GENOME REANNOTATION</scope>
    <source>
        <strain>cv. Nipponbare</strain>
    </source>
</reference>
<reference key="5">
    <citation type="journal article" date="2003" name="Science">
        <title>Collection, mapping, and annotation of over 28,000 cDNA clones from japonica rice.</title>
        <authorList>
            <consortium name="The rice full-length cDNA consortium"/>
        </authorList>
    </citation>
    <scope>NUCLEOTIDE SEQUENCE [LARGE SCALE MRNA]</scope>
    <source>
        <strain>cv. Nipponbare</strain>
    </source>
</reference>
<reference key="6">
    <citation type="journal article" date="2007" name="BMC Plant Biol.">
        <title>Genome-wide identification and analyses of the rice calmodulin and related potential calcium sensor proteins.</title>
        <authorList>
            <person name="Boonburapong B."/>
            <person name="Buaboocha T."/>
        </authorList>
    </citation>
    <scope>GENE FAMILY</scope>
    <scope>NOMENCLATURE</scope>
</reference>
<name>CML14_ORYSJ</name>
<accession>Q6L5F4</accession>
<accession>B7F5A3</accession>
<gene>
    <name type="primary">CML14</name>
    <name type="ordered locus">Os05g0577500</name>
    <name type="ordered locus">LOC_Os05g50180</name>
    <name type="ORF">OJ1126_B10.8</name>
</gene>
<keyword id="KW-0106">Calcium</keyword>
<keyword id="KW-0479">Metal-binding</keyword>
<keyword id="KW-1185">Reference proteome</keyword>
<keyword id="KW-0677">Repeat</keyword>
<comment type="function">
    <text evidence="1">Potential calcium sensor.</text>
</comment>
<comment type="caution">
    <text evidence="3">Although assigned as a calmodulin family member by PubMed:17263873, it only contains EF-hand domains.</text>
</comment>
<protein>
    <recommendedName>
        <fullName>Probable calcium-binding protein CML14</fullName>
    </recommendedName>
    <alternativeName>
        <fullName>Calmodulin-like protein 14</fullName>
    </alternativeName>
</protein>
<dbReference type="EMBL" id="AC098571">
    <property type="protein sequence ID" value="AAT39151.1"/>
    <property type="molecule type" value="Genomic_DNA"/>
</dbReference>
<dbReference type="EMBL" id="AP008211">
    <property type="protein sequence ID" value="BAF18321.1"/>
    <property type="molecule type" value="Genomic_DNA"/>
</dbReference>
<dbReference type="EMBL" id="AP014961">
    <property type="protein sequence ID" value="BAS95492.1"/>
    <property type="molecule type" value="Genomic_DNA"/>
</dbReference>
<dbReference type="EMBL" id="AK119799">
    <property type="protein sequence ID" value="BAG99800.1"/>
    <property type="molecule type" value="mRNA"/>
</dbReference>
<dbReference type="RefSeq" id="XP_015639673.1">
    <property type="nucleotide sequence ID" value="XM_015784187.1"/>
</dbReference>
<dbReference type="SMR" id="Q6L5F4"/>
<dbReference type="FunCoup" id="Q6L5F4">
    <property type="interactions" value="155"/>
</dbReference>
<dbReference type="STRING" id="39947.Q6L5F4"/>
<dbReference type="PaxDb" id="39947-Q6L5F4"/>
<dbReference type="EnsemblPlants" id="Os05t0577500-01">
    <property type="protein sequence ID" value="Os05t0577500-01"/>
    <property type="gene ID" value="Os05g0577500"/>
</dbReference>
<dbReference type="Gramene" id="Os05t0577500-01">
    <property type="protein sequence ID" value="Os05t0577500-01"/>
    <property type="gene ID" value="Os05g0577500"/>
</dbReference>
<dbReference type="KEGG" id="dosa:Os05g0577500"/>
<dbReference type="eggNOG" id="KOG0027">
    <property type="taxonomic scope" value="Eukaryota"/>
</dbReference>
<dbReference type="HOGENOM" id="CLU_061288_2_2_1"/>
<dbReference type="InParanoid" id="Q6L5F4"/>
<dbReference type="OMA" id="HAIMPDL"/>
<dbReference type="OrthoDB" id="26525at2759"/>
<dbReference type="Proteomes" id="UP000000763">
    <property type="component" value="Chromosome 5"/>
</dbReference>
<dbReference type="Proteomes" id="UP000059680">
    <property type="component" value="Chromosome 5"/>
</dbReference>
<dbReference type="GO" id="GO:0005737">
    <property type="term" value="C:cytoplasm"/>
    <property type="evidence" value="ECO:0000318"/>
    <property type="project" value="GO_Central"/>
</dbReference>
<dbReference type="GO" id="GO:0005509">
    <property type="term" value="F:calcium ion binding"/>
    <property type="evidence" value="ECO:0000318"/>
    <property type="project" value="GO_Central"/>
</dbReference>
<dbReference type="GO" id="GO:0030234">
    <property type="term" value="F:enzyme regulator activity"/>
    <property type="evidence" value="ECO:0000318"/>
    <property type="project" value="GO_Central"/>
</dbReference>
<dbReference type="CDD" id="cd00051">
    <property type="entry name" value="EFh"/>
    <property type="match status" value="1"/>
</dbReference>
<dbReference type="FunFam" id="1.10.238.10:FF:000235">
    <property type="entry name" value="Probable calcium-binding protein CML15"/>
    <property type="match status" value="1"/>
</dbReference>
<dbReference type="FunFam" id="1.10.238.10:FF:000123">
    <property type="entry name" value="probable calcium-binding protein CML18"/>
    <property type="match status" value="1"/>
</dbReference>
<dbReference type="Gene3D" id="1.10.238.10">
    <property type="entry name" value="EF-hand"/>
    <property type="match status" value="2"/>
</dbReference>
<dbReference type="InterPro" id="IPR051111">
    <property type="entry name" value="Ca-binding_regulatory"/>
</dbReference>
<dbReference type="InterPro" id="IPR011992">
    <property type="entry name" value="EF-hand-dom_pair"/>
</dbReference>
<dbReference type="InterPro" id="IPR018247">
    <property type="entry name" value="EF_Hand_1_Ca_BS"/>
</dbReference>
<dbReference type="InterPro" id="IPR002048">
    <property type="entry name" value="EF_hand_dom"/>
</dbReference>
<dbReference type="PANTHER" id="PTHR46311">
    <property type="entry name" value="CALCIUM-BINDING PROTEIN 8-RELATED"/>
    <property type="match status" value="1"/>
</dbReference>
<dbReference type="PANTHER" id="PTHR46311:SF5">
    <property type="entry name" value="EF-HAND DOMAIN-CONTAINING PROTEIN"/>
    <property type="match status" value="1"/>
</dbReference>
<dbReference type="Pfam" id="PF13499">
    <property type="entry name" value="EF-hand_7"/>
    <property type="match status" value="2"/>
</dbReference>
<dbReference type="SMART" id="SM00054">
    <property type="entry name" value="EFh"/>
    <property type="match status" value="4"/>
</dbReference>
<dbReference type="SUPFAM" id="SSF47473">
    <property type="entry name" value="EF-hand"/>
    <property type="match status" value="1"/>
</dbReference>
<dbReference type="PROSITE" id="PS00018">
    <property type="entry name" value="EF_HAND_1"/>
    <property type="match status" value="4"/>
</dbReference>
<dbReference type="PROSITE" id="PS50222">
    <property type="entry name" value="EF_HAND_2"/>
    <property type="match status" value="4"/>
</dbReference>
<feature type="chain" id="PRO_0000338429" description="Probable calcium-binding protein CML14">
    <location>
        <begin position="1"/>
        <end position="173"/>
    </location>
</feature>
<feature type="domain" description="EF-hand 1" evidence="2">
    <location>
        <begin position="21"/>
        <end position="56"/>
    </location>
</feature>
<feature type="domain" description="EF-hand 2" evidence="2">
    <location>
        <begin position="57"/>
        <end position="92"/>
    </location>
</feature>
<feature type="domain" description="EF-hand 3" evidence="2">
    <location>
        <begin position="97"/>
        <end position="132"/>
    </location>
</feature>
<feature type="domain" description="EF-hand 4" evidence="2">
    <location>
        <begin position="133"/>
        <end position="168"/>
    </location>
</feature>
<feature type="binding site" evidence="2">
    <location>
        <position position="34"/>
    </location>
    <ligand>
        <name>Ca(2+)</name>
        <dbReference type="ChEBI" id="CHEBI:29108"/>
        <label>1</label>
    </ligand>
</feature>
<feature type="binding site" evidence="2">
    <location>
        <position position="36"/>
    </location>
    <ligand>
        <name>Ca(2+)</name>
        <dbReference type="ChEBI" id="CHEBI:29108"/>
        <label>1</label>
    </ligand>
</feature>
<feature type="binding site" evidence="2">
    <location>
        <position position="38"/>
    </location>
    <ligand>
        <name>Ca(2+)</name>
        <dbReference type="ChEBI" id="CHEBI:29108"/>
        <label>1</label>
    </ligand>
</feature>
<feature type="binding site" evidence="2">
    <location>
        <position position="40"/>
    </location>
    <ligand>
        <name>Ca(2+)</name>
        <dbReference type="ChEBI" id="CHEBI:29108"/>
        <label>1</label>
    </ligand>
</feature>
<feature type="binding site" evidence="2">
    <location>
        <position position="45"/>
    </location>
    <ligand>
        <name>Ca(2+)</name>
        <dbReference type="ChEBI" id="CHEBI:29108"/>
        <label>1</label>
    </ligand>
</feature>
<feature type="binding site" evidence="2">
    <location>
        <position position="70"/>
    </location>
    <ligand>
        <name>Ca(2+)</name>
        <dbReference type="ChEBI" id="CHEBI:29108"/>
        <label>2</label>
    </ligand>
</feature>
<feature type="binding site" evidence="2">
    <location>
        <position position="72"/>
    </location>
    <ligand>
        <name>Ca(2+)</name>
        <dbReference type="ChEBI" id="CHEBI:29108"/>
        <label>2</label>
    </ligand>
</feature>
<feature type="binding site" evidence="2">
    <location>
        <position position="74"/>
    </location>
    <ligand>
        <name>Ca(2+)</name>
        <dbReference type="ChEBI" id="CHEBI:29108"/>
        <label>2</label>
    </ligand>
</feature>
<feature type="binding site" evidence="2">
    <location>
        <position position="76"/>
    </location>
    <ligand>
        <name>Ca(2+)</name>
        <dbReference type="ChEBI" id="CHEBI:29108"/>
        <label>2</label>
    </ligand>
</feature>
<feature type="binding site" evidence="2">
    <location>
        <position position="81"/>
    </location>
    <ligand>
        <name>Ca(2+)</name>
        <dbReference type="ChEBI" id="CHEBI:29108"/>
        <label>2</label>
    </ligand>
</feature>
<feature type="binding site" evidence="2">
    <location>
        <position position="110"/>
    </location>
    <ligand>
        <name>Ca(2+)</name>
        <dbReference type="ChEBI" id="CHEBI:29108"/>
        <label>3</label>
    </ligand>
</feature>
<feature type="binding site" evidence="2">
    <location>
        <position position="112"/>
    </location>
    <ligand>
        <name>Ca(2+)</name>
        <dbReference type="ChEBI" id="CHEBI:29108"/>
        <label>3</label>
    </ligand>
</feature>
<feature type="binding site" evidence="2">
    <location>
        <position position="114"/>
    </location>
    <ligand>
        <name>Ca(2+)</name>
        <dbReference type="ChEBI" id="CHEBI:29108"/>
        <label>3</label>
    </ligand>
</feature>
<feature type="binding site" evidence="2">
    <location>
        <position position="121"/>
    </location>
    <ligand>
        <name>Ca(2+)</name>
        <dbReference type="ChEBI" id="CHEBI:29108"/>
        <label>3</label>
    </ligand>
</feature>
<feature type="binding site" evidence="2">
    <location>
        <position position="146"/>
    </location>
    <ligand>
        <name>Ca(2+)</name>
        <dbReference type="ChEBI" id="CHEBI:29108"/>
        <label>4</label>
    </ligand>
</feature>
<feature type="binding site" evidence="2">
    <location>
        <position position="148"/>
    </location>
    <ligand>
        <name>Ca(2+)</name>
        <dbReference type="ChEBI" id="CHEBI:29108"/>
        <label>4</label>
    </ligand>
</feature>
<feature type="binding site" evidence="2">
    <location>
        <position position="150"/>
    </location>
    <ligand>
        <name>Ca(2+)</name>
        <dbReference type="ChEBI" id="CHEBI:29108"/>
        <label>4</label>
    </ligand>
</feature>
<feature type="binding site" evidence="2">
    <location>
        <position position="157"/>
    </location>
    <ligand>
        <name>Ca(2+)</name>
        <dbReference type="ChEBI" id="CHEBI:29108"/>
        <label>4</label>
    </ligand>
</feature>
<sequence>MTTMAARRSEAAPAPQQLRGSQLKQLRELFRRFDMNGDGSLTQLELAALLRSLGLRPTGDEVHALLAGMDANGNGSVEFDELAAAIAPVLTTQTHLVDQAQLLEVFRAFDRDGNGFISAAELARSMARLGQPLTFEELTRMMRDADTDGDGVISFKEFAAVMAKSALDFLGVA</sequence>
<organism>
    <name type="scientific">Oryza sativa subsp. japonica</name>
    <name type="common">Rice</name>
    <dbReference type="NCBI Taxonomy" id="39947"/>
    <lineage>
        <taxon>Eukaryota</taxon>
        <taxon>Viridiplantae</taxon>
        <taxon>Streptophyta</taxon>
        <taxon>Embryophyta</taxon>
        <taxon>Tracheophyta</taxon>
        <taxon>Spermatophyta</taxon>
        <taxon>Magnoliopsida</taxon>
        <taxon>Liliopsida</taxon>
        <taxon>Poales</taxon>
        <taxon>Poaceae</taxon>
        <taxon>BOP clade</taxon>
        <taxon>Oryzoideae</taxon>
        <taxon>Oryzeae</taxon>
        <taxon>Oryzinae</taxon>
        <taxon>Oryza</taxon>
        <taxon>Oryza sativa</taxon>
    </lineage>
</organism>